<gene>
    <name evidence="1" type="primary">rplA</name>
    <name type="ordered locus">xcc-b100_3469</name>
</gene>
<comment type="function">
    <text evidence="1">Binds directly to 23S rRNA. The L1 stalk is quite mobile in the ribosome, and is involved in E site tRNA release.</text>
</comment>
<comment type="function">
    <text evidence="1">Protein L1 is also a translational repressor protein, it controls the translation of the L11 operon by binding to its mRNA.</text>
</comment>
<comment type="subunit">
    <text evidence="1">Part of the 50S ribosomal subunit.</text>
</comment>
<comment type="similarity">
    <text evidence="1">Belongs to the universal ribosomal protein uL1 family.</text>
</comment>
<name>RL1_XANCB</name>
<evidence type="ECO:0000255" key="1">
    <source>
        <dbReference type="HAMAP-Rule" id="MF_01318"/>
    </source>
</evidence>
<evidence type="ECO:0000305" key="2"/>
<protein>
    <recommendedName>
        <fullName evidence="1">Large ribosomal subunit protein uL1</fullName>
    </recommendedName>
    <alternativeName>
        <fullName evidence="2">50S ribosomal protein L1</fullName>
    </alternativeName>
</protein>
<feature type="chain" id="PRO_1000141481" description="Large ribosomal subunit protein uL1">
    <location>
        <begin position="1"/>
        <end position="232"/>
    </location>
</feature>
<proteinExistence type="inferred from homology"/>
<organism>
    <name type="scientific">Xanthomonas campestris pv. campestris (strain B100)</name>
    <dbReference type="NCBI Taxonomy" id="509169"/>
    <lineage>
        <taxon>Bacteria</taxon>
        <taxon>Pseudomonadati</taxon>
        <taxon>Pseudomonadota</taxon>
        <taxon>Gammaproteobacteria</taxon>
        <taxon>Lysobacterales</taxon>
        <taxon>Lysobacteraceae</taxon>
        <taxon>Xanthomonas</taxon>
    </lineage>
</organism>
<accession>B0RU92</accession>
<sequence>MAQSKRVKAIAAAVVPGKTYAFEDAIKILKTSTKAKFVESIDVAVRLGVDAKKSDQQVRGSTVLPAGTGKSVRVAVFAPAGAKADEALAAGAEAVGMDDLAEKMQAGDLNYDVVIATPDAMRVVGKLGTLLGPRGLMPNPKVGTVSPNPGEAVKNAKSGQVRYRTDKAGIIHCTIGKASFDDEALKSNLQALLLDLVKAKPATSKGTYLQKVSVSSTMGPGVTVDQSSLSLK</sequence>
<keyword id="KW-0678">Repressor</keyword>
<keyword id="KW-0687">Ribonucleoprotein</keyword>
<keyword id="KW-0689">Ribosomal protein</keyword>
<keyword id="KW-0694">RNA-binding</keyword>
<keyword id="KW-0699">rRNA-binding</keyword>
<keyword id="KW-0810">Translation regulation</keyword>
<keyword id="KW-0820">tRNA-binding</keyword>
<dbReference type="EMBL" id="AM920689">
    <property type="protein sequence ID" value="CAP52834.1"/>
    <property type="molecule type" value="Genomic_DNA"/>
</dbReference>
<dbReference type="SMR" id="B0RU92"/>
<dbReference type="KEGG" id="xca:xcc-b100_3469"/>
<dbReference type="HOGENOM" id="CLU_062853_0_0_6"/>
<dbReference type="Proteomes" id="UP000001188">
    <property type="component" value="Chromosome"/>
</dbReference>
<dbReference type="GO" id="GO:0022625">
    <property type="term" value="C:cytosolic large ribosomal subunit"/>
    <property type="evidence" value="ECO:0007669"/>
    <property type="project" value="TreeGrafter"/>
</dbReference>
<dbReference type="GO" id="GO:0019843">
    <property type="term" value="F:rRNA binding"/>
    <property type="evidence" value="ECO:0007669"/>
    <property type="project" value="UniProtKB-UniRule"/>
</dbReference>
<dbReference type="GO" id="GO:0003735">
    <property type="term" value="F:structural constituent of ribosome"/>
    <property type="evidence" value="ECO:0007669"/>
    <property type="project" value="InterPro"/>
</dbReference>
<dbReference type="GO" id="GO:0000049">
    <property type="term" value="F:tRNA binding"/>
    <property type="evidence" value="ECO:0007669"/>
    <property type="project" value="UniProtKB-KW"/>
</dbReference>
<dbReference type="GO" id="GO:0006417">
    <property type="term" value="P:regulation of translation"/>
    <property type="evidence" value="ECO:0007669"/>
    <property type="project" value="UniProtKB-KW"/>
</dbReference>
<dbReference type="GO" id="GO:0006412">
    <property type="term" value="P:translation"/>
    <property type="evidence" value="ECO:0007669"/>
    <property type="project" value="UniProtKB-UniRule"/>
</dbReference>
<dbReference type="CDD" id="cd00403">
    <property type="entry name" value="Ribosomal_L1"/>
    <property type="match status" value="1"/>
</dbReference>
<dbReference type="FunFam" id="3.40.50.790:FF:000001">
    <property type="entry name" value="50S ribosomal protein L1"/>
    <property type="match status" value="1"/>
</dbReference>
<dbReference type="Gene3D" id="3.30.190.20">
    <property type="match status" value="1"/>
</dbReference>
<dbReference type="Gene3D" id="3.40.50.790">
    <property type="match status" value="1"/>
</dbReference>
<dbReference type="HAMAP" id="MF_01318_B">
    <property type="entry name" value="Ribosomal_uL1_B"/>
    <property type="match status" value="1"/>
</dbReference>
<dbReference type="InterPro" id="IPR005878">
    <property type="entry name" value="Ribosom_uL1_bac-type"/>
</dbReference>
<dbReference type="InterPro" id="IPR002143">
    <property type="entry name" value="Ribosomal_uL1"/>
</dbReference>
<dbReference type="InterPro" id="IPR023674">
    <property type="entry name" value="Ribosomal_uL1-like"/>
</dbReference>
<dbReference type="InterPro" id="IPR028364">
    <property type="entry name" value="Ribosomal_uL1/biogenesis"/>
</dbReference>
<dbReference type="InterPro" id="IPR016095">
    <property type="entry name" value="Ribosomal_uL1_3-a/b-sand"/>
</dbReference>
<dbReference type="InterPro" id="IPR023673">
    <property type="entry name" value="Ribosomal_uL1_CS"/>
</dbReference>
<dbReference type="NCBIfam" id="TIGR01169">
    <property type="entry name" value="rplA_bact"/>
    <property type="match status" value="1"/>
</dbReference>
<dbReference type="PANTHER" id="PTHR36427">
    <property type="entry name" value="54S RIBOSOMAL PROTEIN L1, MITOCHONDRIAL"/>
    <property type="match status" value="1"/>
</dbReference>
<dbReference type="PANTHER" id="PTHR36427:SF3">
    <property type="entry name" value="LARGE RIBOSOMAL SUBUNIT PROTEIN UL1M"/>
    <property type="match status" value="1"/>
</dbReference>
<dbReference type="Pfam" id="PF00687">
    <property type="entry name" value="Ribosomal_L1"/>
    <property type="match status" value="1"/>
</dbReference>
<dbReference type="PIRSF" id="PIRSF002155">
    <property type="entry name" value="Ribosomal_L1"/>
    <property type="match status" value="1"/>
</dbReference>
<dbReference type="SUPFAM" id="SSF56808">
    <property type="entry name" value="Ribosomal protein L1"/>
    <property type="match status" value="1"/>
</dbReference>
<dbReference type="PROSITE" id="PS01199">
    <property type="entry name" value="RIBOSOMAL_L1"/>
    <property type="match status" value="1"/>
</dbReference>
<reference key="1">
    <citation type="journal article" date="2008" name="J. Biotechnol.">
        <title>The genome of Xanthomonas campestris pv. campestris B100 and its use for the reconstruction of metabolic pathways involved in xanthan biosynthesis.</title>
        <authorList>
            <person name="Vorhoelter F.-J."/>
            <person name="Schneiker S."/>
            <person name="Goesmann A."/>
            <person name="Krause L."/>
            <person name="Bekel T."/>
            <person name="Kaiser O."/>
            <person name="Linke B."/>
            <person name="Patschkowski T."/>
            <person name="Rueckert C."/>
            <person name="Schmid J."/>
            <person name="Sidhu V.K."/>
            <person name="Sieber V."/>
            <person name="Tauch A."/>
            <person name="Watt S.A."/>
            <person name="Weisshaar B."/>
            <person name="Becker A."/>
            <person name="Niehaus K."/>
            <person name="Puehler A."/>
        </authorList>
    </citation>
    <scope>NUCLEOTIDE SEQUENCE [LARGE SCALE GENOMIC DNA]</scope>
    <source>
        <strain>B100</strain>
    </source>
</reference>